<accession>B0Y4N5</accession>
<evidence type="ECO:0000250" key="1"/>
<evidence type="ECO:0000255" key="2"/>
<evidence type="ECO:0000256" key="3">
    <source>
        <dbReference type="SAM" id="MobiDB-lite"/>
    </source>
</evidence>
<evidence type="ECO:0000305" key="4"/>
<comment type="function">
    <text evidence="1">Component of the regulatory network controlling carbon source utilization through ubiquitination and deubiquitination involving creA, creB, creC, creD and acrB. Involved in resistance to acriflavine, and required for normal growth on a range of sole carbon sources, including fructose, cellobiose, raffinose, and starch, and reduced utilization of amino acids, including GABA and beta-alanine, as sole carbon and nitrogen sources (By similarity).</text>
</comment>
<comment type="subcellular location">
    <subcellularLocation>
        <location evidence="4">Membrane</location>
        <topology evidence="4">Multi-pass membrane protein</topology>
    </subcellularLocation>
</comment>
<comment type="similarity">
    <text evidence="4">Belongs to the acrB family.</text>
</comment>
<sequence>MPRSSATARKSHSNRHENGSANTGKKVAKQKSNGHLNGNLNGGSASSSLSSSQVDLPSSRSSSDPVVPTTTAASTKLNGTPDSSKGDCNAPDHLNGYAKGNADMSYVQNDGVASQTGGDVAGPASRRTEKSATGSKRSPSNASVNPLQLASTILKSCPMYDTIAILIFLLQLPPMVLTLVQFLFASLTFLPPSGASAGSLTSNFDIFQGPAGTPSLGTMIAMDGFCLLIWGLFMWTWAQNFALDLAHVQVAITLGGGGFGKNGGVNTLCVGIVLIMHLVRSKGIQDFVIGHLLSSNIISPDMLSQYSHLLPTEFRRTEPQTSPSWLRSLLAVHILAQAGTAMARRSMAKNRTPNPPRTGKRIDTEASAGSQTQIDSAFESGASVSSYIGADGQIVTSAAHKDGRDRLLSAKKRRRQANQVRSRQPFWAALASTKITVMREYEHSRALSKTARSLPMTEDDLQGLSLDDGLVWITEIDSSTIKFAAGDFSSADDSSGSGACEAGCLGSEDMEPFYVCVNGALWATATICKVHDAPKGSSMVHWRGEISGLAPNCAYTCSFVRSDTDEEICVISVKTPANNDAEQVSSVSTPPHPSYRPSSPTTTLKNSIVNAEAKLNEKRSRLRKAKNDHKLIISKIRKELDNYNHRLHSGTDENRQKQRSLQLERNIRQTEEATALLEDQLDNLENVPEEELRKWSDQKAKYEHELGLLNSAKEELASARSAIAREVSSLETELSSAIQRRERLQSRRTRINEQYERIVSANAQGLNERERRAAEQFAREQDQAKLEATFNEQFATIGQSVQEYQLRAQQIWQQCDAIEQAIQQQHQQMLLDPGPLTPEGNLPGTNPFSESALPLGALTSTAPSSRSLLGLSFPPLKSSPLQTASSPVGASSSHPTSPVQQPSYLNFPTSPLVNASSHLDSDFVYRHRSFSNRSARSSLYGSDFMDSSRRQPFQLDLSELLADKRSPGSDSNTALNSGLRPVSSPFQRAGSRGSGSGSNGSGGSGSGSGSPSSVYGKTN</sequence>
<keyword id="KW-0175">Coiled coil</keyword>
<keyword id="KW-0472">Membrane</keyword>
<keyword id="KW-0812">Transmembrane</keyword>
<keyword id="KW-1133">Transmembrane helix</keyword>
<keyword id="KW-0833">Ubl conjugation pathway</keyword>
<proteinExistence type="inferred from homology"/>
<gene>
    <name type="primary">acrB</name>
    <name type="synonym">acr2</name>
    <name type="ORF">AFUB_069710</name>
</gene>
<protein>
    <recommendedName>
        <fullName>Probable ubiquitination network signaling protein acrB</fullName>
    </recommendedName>
    <alternativeName>
        <fullName>Acriflavine resistance protein B</fullName>
    </alternativeName>
</protein>
<feature type="chain" id="PRO_0000395727" description="Probable ubiquitination network signaling protein acrB">
    <location>
        <begin position="1"/>
        <end position="1019"/>
    </location>
</feature>
<feature type="transmembrane region" description="Helical" evidence="2">
    <location>
        <begin position="163"/>
        <end position="183"/>
    </location>
</feature>
<feature type="transmembrane region" description="Helical" evidence="2">
    <location>
        <begin position="216"/>
        <end position="236"/>
    </location>
</feature>
<feature type="transmembrane region" description="Helical" evidence="2">
    <location>
        <begin position="259"/>
        <end position="279"/>
    </location>
</feature>
<feature type="region of interest" description="Disordered" evidence="3">
    <location>
        <begin position="1"/>
        <end position="94"/>
    </location>
</feature>
<feature type="region of interest" description="Disordered" evidence="3">
    <location>
        <begin position="109"/>
        <end position="143"/>
    </location>
</feature>
<feature type="region of interest" description="Disordered" evidence="3">
    <location>
        <begin position="343"/>
        <end position="371"/>
    </location>
</feature>
<feature type="region of interest" description="Disordered" evidence="3">
    <location>
        <begin position="580"/>
        <end position="603"/>
    </location>
</feature>
<feature type="region of interest" description="Disordered" evidence="3">
    <location>
        <begin position="831"/>
        <end position="855"/>
    </location>
</feature>
<feature type="region of interest" description="Disordered" evidence="3">
    <location>
        <begin position="879"/>
        <end position="905"/>
    </location>
</feature>
<feature type="region of interest" description="Disordered" evidence="3">
    <location>
        <begin position="963"/>
        <end position="1019"/>
    </location>
</feature>
<feature type="coiled-coil region" evidence="2">
    <location>
        <begin position="602"/>
        <end position="788"/>
    </location>
</feature>
<feature type="compositionally biased region" description="Low complexity" evidence="3">
    <location>
        <begin position="33"/>
        <end position="63"/>
    </location>
</feature>
<feature type="compositionally biased region" description="Polar residues" evidence="3">
    <location>
        <begin position="68"/>
        <end position="83"/>
    </location>
</feature>
<feature type="compositionally biased region" description="Polar residues" evidence="3">
    <location>
        <begin position="131"/>
        <end position="143"/>
    </location>
</feature>
<feature type="compositionally biased region" description="Polar residues" evidence="3">
    <location>
        <begin position="580"/>
        <end position="589"/>
    </location>
</feature>
<feature type="compositionally biased region" description="Gly residues" evidence="3">
    <location>
        <begin position="992"/>
        <end position="1008"/>
    </location>
</feature>
<name>ACRB_ASPFC</name>
<reference key="1">
    <citation type="journal article" date="2008" name="PLoS Genet.">
        <title>Genomic islands in the pathogenic filamentous fungus Aspergillus fumigatus.</title>
        <authorList>
            <person name="Fedorova N.D."/>
            <person name="Khaldi N."/>
            <person name="Joardar V.S."/>
            <person name="Maiti R."/>
            <person name="Amedeo P."/>
            <person name="Anderson M.J."/>
            <person name="Crabtree J."/>
            <person name="Silva J.C."/>
            <person name="Badger J.H."/>
            <person name="Albarraq A."/>
            <person name="Angiuoli S."/>
            <person name="Bussey H."/>
            <person name="Bowyer P."/>
            <person name="Cotty P.J."/>
            <person name="Dyer P.S."/>
            <person name="Egan A."/>
            <person name="Galens K."/>
            <person name="Fraser-Liggett C.M."/>
            <person name="Haas B.J."/>
            <person name="Inman J.M."/>
            <person name="Kent R."/>
            <person name="Lemieux S."/>
            <person name="Malavazi I."/>
            <person name="Orvis J."/>
            <person name="Roemer T."/>
            <person name="Ronning C.M."/>
            <person name="Sundaram J.P."/>
            <person name="Sutton G."/>
            <person name="Turner G."/>
            <person name="Venter J.C."/>
            <person name="White O.R."/>
            <person name="Whitty B.R."/>
            <person name="Youngman P."/>
            <person name="Wolfe K.H."/>
            <person name="Goldman G.H."/>
            <person name="Wortman J.R."/>
            <person name="Jiang B."/>
            <person name="Denning D.W."/>
            <person name="Nierman W.C."/>
        </authorList>
    </citation>
    <scope>NUCLEOTIDE SEQUENCE [LARGE SCALE GENOMIC DNA]</scope>
    <source>
        <strain>CBS 144.89 / FGSC A1163 / CEA10</strain>
    </source>
</reference>
<organism>
    <name type="scientific">Aspergillus fumigatus (strain CBS 144.89 / FGSC A1163 / CEA10)</name>
    <name type="common">Neosartorya fumigata</name>
    <dbReference type="NCBI Taxonomy" id="451804"/>
    <lineage>
        <taxon>Eukaryota</taxon>
        <taxon>Fungi</taxon>
        <taxon>Dikarya</taxon>
        <taxon>Ascomycota</taxon>
        <taxon>Pezizomycotina</taxon>
        <taxon>Eurotiomycetes</taxon>
        <taxon>Eurotiomycetidae</taxon>
        <taxon>Eurotiales</taxon>
        <taxon>Aspergillaceae</taxon>
        <taxon>Aspergillus</taxon>
        <taxon>Aspergillus subgen. Fumigati</taxon>
    </lineage>
</organism>
<dbReference type="EMBL" id="DS499598">
    <property type="protein sequence ID" value="EDP50634.1"/>
    <property type="molecule type" value="Genomic_DNA"/>
</dbReference>
<dbReference type="SMR" id="B0Y4N5"/>
<dbReference type="EnsemblFungi" id="EDP50634">
    <property type="protein sequence ID" value="EDP50634"/>
    <property type="gene ID" value="AFUB_069710"/>
</dbReference>
<dbReference type="HOGENOM" id="CLU_005822_0_0_1"/>
<dbReference type="OrthoDB" id="113052at5052"/>
<dbReference type="PhylomeDB" id="B0Y4N5"/>
<dbReference type="Proteomes" id="UP000001699">
    <property type="component" value="Unassembled WGS sequence"/>
</dbReference>
<dbReference type="GO" id="GO:0016020">
    <property type="term" value="C:membrane"/>
    <property type="evidence" value="ECO:0007669"/>
    <property type="project" value="UniProtKB-SubCell"/>
</dbReference>
<dbReference type="PROSITE" id="PS00589">
    <property type="entry name" value="PTS_HPR_SER"/>
    <property type="match status" value="1"/>
</dbReference>